<organism>
    <name type="scientific">Bartonella quintana (strain Toulouse)</name>
    <name type="common">Rochalimaea quintana</name>
    <dbReference type="NCBI Taxonomy" id="283165"/>
    <lineage>
        <taxon>Bacteria</taxon>
        <taxon>Pseudomonadati</taxon>
        <taxon>Pseudomonadota</taxon>
        <taxon>Alphaproteobacteria</taxon>
        <taxon>Hyphomicrobiales</taxon>
        <taxon>Bartonellaceae</taxon>
        <taxon>Bartonella</taxon>
    </lineage>
</organism>
<sequence length="208" mass="22844">MSKSYTLKAELRERVGKGSSRELRRNGFIPAVIYGDKQPPLAIAVSYKEIFYKIYAGGFRTTVATIAVGQQKIMVLPKDYQLDPVRDFPIHVDFLRVSAQSVVEVSIPVHFFNEDTAPGLKKGGVLNIVRHEIECIAPANAIPEAIEIDLSNYSIGDSIHISVVKLPKDVTPVIQDRDFTIATIAAPAGMNVSDDSSEQESDKDNAKT</sequence>
<keyword id="KW-0687">Ribonucleoprotein</keyword>
<keyword id="KW-0689">Ribosomal protein</keyword>
<keyword id="KW-0694">RNA-binding</keyword>
<keyword id="KW-0699">rRNA-binding</keyword>
<proteinExistence type="inferred from homology"/>
<name>RL25_BARQU</name>
<feature type="chain" id="PRO_0000181515" description="Large ribosomal subunit protein bL25">
    <location>
        <begin position="1"/>
        <end position="208"/>
    </location>
</feature>
<gene>
    <name evidence="1" type="primary">rplY</name>
    <name evidence="1" type="synonym">ctc</name>
    <name type="ordered locus">BQ03290</name>
</gene>
<comment type="function">
    <text evidence="1">This is one of the proteins that binds to the 5S RNA in the ribosome where it forms part of the central protuberance.</text>
</comment>
<comment type="subunit">
    <text evidence="1">Part of the 50S ribosomal subunit; part of the 5S rRNA/L5/L18/L25 subcomplex. Contacts the 5S rRNA. Binds to the 5S rRNA independently of L5 and L18.</text>
</comment>
<comment type="similarity">
    <text evidence="1">Belongs to the bacterial ribosomal protein bL25 family. CTC subfamily.</text>
</comment>
<evidence type="ECO:0000255" key="1">
    <source>
        <dbReference type="HAMAP-Rule" id="MF_01334"/>
    </source>
</evidence>
<evidence type="ECO:0000305" key="2"/>
<accession>Q6G0F8</accession>
<protein>
    <recommendedName>
        <fullName evidence="1">Large ribosomal subunit protein bL25</fullName>
    </recommendedName>
    <alternativeName>
        <fullName evidence="2">50S ribosomal protein L25</fullName>
    </alternativeName>
    <alternativeName>
        <fullName evidence="1">General stress protein CTC</fullName>
    </alternativeName>
</protein>
<dbReference type="EMBL" id="BX897700">
    <property type="protein sequence ID" value="CAF25829.1"/>
    <property type="molecule type" value="Genomic_DNA"/>
</dbReference>
<dbReference type="RefSeq" id="WP_011179124.1">
    <property type="nucleotide sequence ID" value="NC_005955.1"/>
</dbReference>
<dbReference type="SMR" id="Q6G0F8"/>
<dbReference type="KEGG" id="bqu:BQ03290"/>
<dbReference type="eggNOG" id="COG1825">
    <property type="taxonomic scope" value="Bacteria"/>
</dbReference>
<dbReference type="HOGENOM" id="CLU_075939_0_0_5"/>
<dbReference type="OrthoDB" id="9806411at2"/>
<dbReference type="Proteomes" id="UP000000597">
    <property type="component" value="Chromosome"/>
</dbReference>
<dbReference type="GO" id="GO:0022625">
    <property type="term" value="C:cytosolic large ribosomal subunit"/>
    <property type="evidence" value="ECO:0007669"/>
    <property type="project" value="TreeGrafter"/>
</dbReference>
<dbReference type="GO" id="GO:0008097">
    <property type="term" value="F:5S rRNA binding"/>
    <property type="evidence" value="ECO:0007669"/>
    <property type="project" value="InterPro"/>
</dbReference>
<dbReference type="GO" id="GO:0003735">
    <property type="term" value="F:structural constituent of ribosome"/>
    <property type="evidence" value="ECO:0007669"/>
    <property type="project" value="InterPro"/>
</dbReference>
<dbReference type="GO" id="GO:0006412">
    <property type="term" value="P:translation"/>
    <property type="evidence" value="ECO:0007669"/>
    <property type="project" value="UniProtKB-UniRule"/>
</dbReference>
<dbReference type="CDD" id="cd00495">
    <property type="entry name" value="Ribosomal_L25_TL5_CTC"/>
    <property type="match status" value="1"/>
</dbReference>
<dbReference type="Gene3D" id="2.170.120.20">
    <property type="entry name" value="Ribosomal protein L25, beta domain"/>
    <property type="match status" value="1"/>
</dbReference>
<dbReference type="Gene3D" id="2.40.240.10">
    <property type="entry name" value="Ribosomal Protein L25, Chain P"/>
    <property type="match status" value="1"/>
</dbReference>
<dbReference type="HAMAP" id="MF_01334">
    <property type="entry name" value="Ribosomal_bL25_CTC"/>
    <property type="match status" value="1"/>
</dbReference>
<dbReference type="InterPro" id="IPR020056">
    <property type="entry name" value="Rbsml_bL25/Gln-tRNA_synth_N"/>
</dbReference>
<dbReference type="InterPro" id="IPR011035">
    <property type="entry name" value="Ribosomal_bL25/Gln-tRNA_synth"/>
</dbReference>
<dbReference type="InterPro" id="IPR020057">
    <property type="entry name" value="Ribosomal_bL25_b-dom"/>
</dbReference>
<dbReference type="InterPro" id="IPR037121">
    <property type="entry name" value="Ribosomal_bL25_C"/>
</dbReference>
<dbReference type="InterPro" id="IPR001021">
    <property type="entry name" value="Ribosomal_bL25_long"/>
</dbReference>
<dbReference type="InterPro" id="IPR029751">
    <property type="entry name" value="Ribosomal_L25_dom"/>
</dbReference>
<dbReference type="InterPro" id="IPR020930">
    <property type="entry name" value="Ribosomal_uL5_bac-type"/>
</dbReference>
<dbReference type="NCBIfam" id="TIGR00731">
    <property type="entry name" value="bL25_bact_ctc"/>
    <property type="match status" value="1"/>
</dbReference>
<dbReference type="NCBIfam" id="NF004128">
    <property type="entry name" value="PRK05618.1-2"/>
    <property type="match status" value="1"/>
</dbReference>
<dbReference type="NCBIfam" id="NF004612">
    <property type="entry name" value="PRK05943.1"/>
    <property type="match status" value="1"/>
</dbReference>
<dbReference type="PANTHER" id="PTHR33284">
    <property type="entry name" value="RIBOSOMAL PROTEIN L25/GLN-TRNA SYNTHETASE, ANTI-CODON-BINDING DOMAIN-CONTAINING PROTEIN"/>
    <property type="match status" value="1"/>
</dbReference>
<dbReference type="PANTHER" id="PTHR33284:SF1">
    <property type="entry name" value="RIBOSOMAL PROTEIN L25_GLN-TRNA SYNTHETASE, ANTI-CODON-BINDING DOMAIN-CONTAINING PROTEIN"/>
    <property type="match status" value="1"/>
</dbReference>
<dbReference type="Pfam" id="PF01386">
    <property type="entry name" value="Ribosomal_L25p"/>
    <property type="match status" value="1"/>
</dbReference>
<dbReference type="Pfam" id="PF14693">
    <property type="entry name" value="Ribosomal_TL5_C"/>
    <property type="match status" value="1"/>
</dbReference>
<dbReference type="SUPFAM" id="SSF50715">
    <property type="entry name" value="Ribosomal protein L25-like"/>
    <property type="match status" value="1"/>
</dbReference>
<reference key="1">
    <citation type="journal article" date="2004" name="Proc. Natl. Acad. Sci. U.S.A.">
        <title>The louse-borne human pathogen Bartonella quintana is a genomic derivative of the zoonotic agent Bartonella henselae.</title>
        <authorList>
            <person name="Alsmark U.C.M."/>
            <person name="Frank A.C."/>
            <person name="Karlberg E.O."/>
            <person name="Legault B.-A."/>
            <person name="Ardell D.H."/>
            <person name="Canbaeck B."/>
            <person name="Eriksson A.-S."/>
            <person name="Naeslund A.K."/>
            <person name="Handley S.A."/>
            <person name="Huvet M."/>
            <person name="La Scola B."/>
            <person name="Holmberg M."/>
            <person name="Andersson S.G.E."/>
        </authorList>
    </citation>
    <scope>NUCLEOTIDE SEQUENCE [LARGE SCALE GENOMIC DNA]</scope>
    <source>
        <strain>Toulouse</strain>
    </source>
</reference>